<comment type="function">
    <text evidence="2">Part of the sulfoquinovose monooxygenase (sulfo-SMO) pathway, a D-sulfoquinovose degradation pathway that enables the complete utilization of all carbons within sulfoquinovose (SQ) with concomitant production of inorganic sulfite (PubMed:35074914). Catalyzes the oxidative desulfurization of sulfoquinovose to sulfite and 6-dehydro-D-glucose (PubMed:35074914). Is highly specific for sulfoquinovose and cannot use sulfoquinovosyl glycerol (PubMed:35074914). FMNH(2) is provided by the FMN reductase SmoA (PubMed:35074914).</text>
</comment>
<comment type="catalytic activity">
    <reaction evidence="2">
        <text>6-sulfo-D-quinovose + FMNH2 + O2 = 6-dehydro-D-glucose + FMN + sulfite + H2O + 2 H(+)</text>
        <dbReference type="Rhea" id="RHEA:70775"/>
        <dbReference type="ChEBI" id="CHEBI:15377"/>
        <dbReference type="ChEBI" id="CHEBI:15378"/>
        <dbReference type="ChEBI" id="CHEBI:15379"/>
        <dbReference type="ChEBI" id="CHEBI:17359"/>
        <dbReference type="ChEBI" id="CHEBI:57618"/>
        <dbReference type="ChEBI" id="CHEBI:58210"/>
        <dbReference type="ChEBI" id="CHEBI:77132"/>
        <dbReference type="ChEBI" id="CHEBI:190013"/>
        <dbReference type="EC" id="1.14.14.181"/>
    </reaction>
    <physiologicalReaction direction="left-to-right" evidence="2">
        <dbReference type="Rhea" id="RHEA:70776"/>
    </physiologicalReaction>
</comment>
<comment type="subunit">
    <text evidence="2">Homodimer.</text>
</comment>
<comment type="induction">
    <text evidence="2">Induced during growth on sulfoquinovose.</text>
</comment>
<comment type="similarity">
    <text evidence="4">Belongs to the SsuD family.</text>
</comment>
<reference key="1">
    <citation type="journal article" date="2001" name="Science">
        <title>The genome of the natural genetic engineer Agrobacterium tumefaciens C58.</title>
        <authorList>
            <person name="Wood D.W."/>
            <person name="Setubal J.C."/>
            <person name="Kaul R."/>
            <person name="Monks D.E."/>
            <person name="Kitajima J.P."/>
            <person name="Okura V.K."/>
            <person name="Zhou Y."/>
            <person name="Chen L."/>
            <person name="Wood G.E."/>
            <person name="Almeida N.F. Jr."/>
            <person name="Woo L."/>
            <person name="Chen Y."/>
            <person name="Paulsen I.T."/>
            <person name="Eisen J.A."/>
            <person name="Karp P.D."/>
            <person name="Bovee D. Sr."/>
            <person name="Chapman P."/>
            <person name="Clendenning J."/>
            <person name="Deatherage G."/>
            <person name="Gillet W."/>
            <person name="Grant C."/>
            <person name="Kutyavin T."/>
            <person name="Levy R."/>
            <person name="Li M.-J."/>
            <person name="McClelland E."/>
            <person name="Palmieri A."/>
            <person name="Raymond C."/>
            <person name="Rouse G."/>
            <person name="Saenphimmachak C."/>
            <person name="Wu Z."/>
            <person name="Romero P."/>
            <person name="Gordon D."/>
            <person name="Zhang S."/>
            <person name="Yoo H."/>
            <person name="Tao Y."/>
            <person name="Biddle P."/>
            <person name="Jung M."/>
            <person name="Krespan W."/>
            <person name="Perry M."/>
            <person name="Gordon-Kamm B."/>
            <person name="Liao L."/>
            <person name="Kim S."/>
            <person name="Hendrick C."/>
            <person name="Zhao Z.-Y."/>
            <person name="Dolan M."/>
            <person name="Chumley F."/>
            <person name="Tingey S.V."/>
            <person name="Tomb J.-F."/>
            <person name="Gordon M.P."/>
            <person name="Olson M.V."/>
            <person name="Nester E.W."/>
        </authorList>
    </citation>
    <scope>NUCLEOTIDE SEQUENCE [LARGE SCALE GENOMIC DNA]</scope>
    <source>
        <strain>C58 / ATCC 33970</strain>
    </source>
</reference>
<reference key="2">
    <citation type="journal article" date="2001" name="Science">
        <title>Genome sequence of the plant pathogen and biotechnology agent Agrobacterium tumefaciens C58.</title>
        <authorList>
            <person name="Goodner B."/>
            <person name="Hinkle G."/>
            <person name="Gattung S."/>
            <person name="Miller N."/>
            <person name="Blanchard M."/>
            <person name="Qurollo B."/>
            <person name="Goldman B.S."/>
            <person name="Cao Y."/>
            <person name="Askenazi M."/>
            <person name="Halling C."/>
            <person name="Mullin L."/>
            <person name="Houmiel K."/>
            <person name="Gordon J."/>
            <person name="Vaudin M."/>
            <person name="Iartchouk O."/>
            <person name="Epp A."/>
            <person name="Liu F."/>
            <person name="Wollam C."/>
            <person name="Allinger M."/>
            <person name="Doughty D."/>
            <person name="Scott C."/>
            <person name="Lappas C."/>
            <person name="Markelz B."/>
            <person name="Flanagan C."/>
            <person name="Crowell C."/>
            <person name="Gurson J."/>
            <person name="Lomo C."/>
            <person name="Sear C."/>
            <person name="Strub G."/>
            <person name="Cielo C."/>
            <person name="Slater S."/>
        </authorList>
    </citation>
    <scope>NUCLEOTIDE SEQUENCE [LARGE SCALE GENOMIC DNA]</scope>
    <source>
        <strain>C58 / ATCC 33970</strain>
    </source>
</reference>
<reference evidence="6" key="3">
    <citation type="journal article" date="2022" name="Proc. Natl. Acad. Sci. U.S.A.">
        <title>Oxidative desulfurization pathway for complete catabolism of sulfoquinovose by bacteria.</title>
        <authorList>
            <person name="Sharma M."/>
            <person name="Lingford J.P."/>
            <person name="Petricevic M."/>
            <person name="Snow A.J.D."/>
            <person name="Zhang Y."/>
            <person name="Jaervaa M.A."/>
            <person name="Mui J.W."/>
            <person name="Scott N.E."/>
            <person name="Saunders E.C."/>
            <person name="Mao R."/>
            <person name="Epa R."/>
            <person name="da Silva B.M."/>
            <person name="Pires D.E.V."/>
            <person name="Ascher D.B."/>
            <person name="McConville M.J."/>
            <person name="Davies G.J."/>
            <person name="Williams S.J."/>
            <person name="Goddard-Borger E.D."/>
        </authorList>
    </citation>
    <scope>X-RAY CRYSTALLOGRAPHY (3.40 ANGSTROMS)</scope>
    <scope>FUNCTION</scope>
    <scope>CATALYTIC ACTIVITY</scope>
    <scope>INDUCTION</scope>
    <scope>SUBUNIT</scope>
    <source>
        <strain>C58 / ATCC 33970</strain>
    </source>
</reference>
<protein>
    <recommendedName>
        <fullName evidence="3">Sulfoquinovose monooxygenase</fullName>
        <shortName evidence="3">SQ monooxygenase</shortName>
        <ecNumber evidence="2">1.14.14.181</ecNumber>
    </recommendedName>
    <alternativeName>
        <fullName evidence="3">SQ monooxygenase cluster protein C</fullName>
    </alternativeName>
</protein>
<dbReference type="EC" id="1.14.14.181" evidence="2"/>
<dbReference type="EMBL" id="AE007870">
    <property type="protein sequence ID" value="AAK90111.1"/>
    <property type="molecule type" value="Genomic_DNA"/>
</dbReference>
<dbReference type="PIR" id="AI2959">
    <property type="entry name" value="AI2959"/>
</dbReference>
<dbReference type="PIR" id="E98323">
    <property type="entry name" value="E98323"/>
</dbReference>
<dbReference type="RefSeq" id="NP_357326.1">
    <property type="nucleotide sequence ID" value="NC_003063.2"/>
</dbReference>
<dbReference type="RefSeq" id="WP_006314866.1">
    <property type="nucleotide sequence ID" value="NC_003063.2"/>
</dbReference>
<dbReference type="PDB" id="7OLF">
    <property type="method" value="X-ray"/>
    <property type="resolution" value="3.40 A"/>
    <property type="chains" value="A/B=1-385"/>
</dbReference>
<dbReference type="PDBsum" id="7OLF"/>
<dbReference type="SMR" id="A9CEY7"/>
<dbReference type="STRING" id="176299.Atu3279"/>
<dbReference type="EnsemblBacteria" id="AAK90111">
    <property type="protein sequence ID" value="AAK90111"/>
    <property type="gene ID" value="Atu3279"/>
</dbReference>
<dbReference type="GeneID" id="1135153"/>
<dbReference type="KEGG" id="atu:Atu3279"/>
<dbReference type="PATRIC" id="fig|176299.10.peg.3120"/>
<dbReference type="eggNOG" id="COG2141">
    <property type="taxonomic scope" value="Bacteria"/>
</dbReference>
<dbReference type="HOGENOM" id="CLU_027853_1_0_5"/>
<dbReference type="OrthoDB" id="9814695at2"/>
<dbReference type="PhylomeDB" id="A9CEY7"/>
<dbReference type="BioCyc" id="AGRO:ATU3279-MONOMER"/>
<dbReference type="BioCyc" id="MetaCyc:ATU3279-MONOMER"/>
<dbReference type="Proteomes" id="UP000000813">
    <property type="component" value="Chromosome linear"/>
</dbReference>
<dbReference type="GO" id="GO:0008726">
    <property type="term" value="F:alkanesulfonate monooxygenase activity"/>
    <property type="evidence" value="ECO:0007669"/>
    <property type="project" value="TreeGrafter"/>
</dbReference>
<dbReference type="GO" id="GO:0046306">
    <property type="term" value="P:alkanesulfonate catabolic process"/>
    <property type="evidence" value="ECO:0007669"/>
    <property type="project" value="TreeGrafter"/>
</dbReference>
<dbReference type="CDD" id="cd01094">
    <property type="entry name" value="Alkanesulfonate_monoxygenase"/>
    <property type="match status" value="1"/>
</dbReference>
<dbReference type="Gene3D" id="3.20.20.30">
    <property type="entry name" value="Luciferase-like domain"/>
    <property type="match status" value="1"/>
</dbReference>
<dbReference type="InterPro" id="IPR011251">
    <property type="entry name" value="Luciferase-like_dom"/>
</dbReference>
<dbReference type="InterPro" id="IPR036661">
    <property type="entry name" value="Luciferase-like_sf"/>
</dbReference>
<dbReference type="InterPro" id="IPR050172">
    <property type="entry name" value="SsuD_RutA_monooxygenase"/>
</dbReference>
<dbReference type="PANTHER" id="PTHR42847">
    <property type="entry name" value="ALKANESULFONATE MONOOXYGENASE"/>
    <property type="match status" value="1"/>
</dbReference>
<dbReference type="PANTHER" id="PTHR42847:SF4">
    <property type="entry name" value="ALKANESULFONATE MONOOXYGENASE-RELATED"/>
    <property type="match status" value="1"/>
</dbReference>
<dbReference type="Pfam" id="PF00296">
    <property type="entry name" value="Bac_luciferase"/>
    <property type="match status" value="1"/>
</dbReference>
<dbReference type="SUPFAM" id="SSF51679">
    <property type="entry name" value="Bacterial luciferase-like"/>
    <property type="match status" value="1"/>
</dbReference>
<keyword id="KW-0002">3D-structure</keyword>
<keyword id="KW-0119">Carbohydrate metabolism</keyword>
<keyword id="KW-0285">Flavoprotein</keyword>
<keyword id="KW-0288">FMN</keyword>
<keyword id="KW-0503">Monooxygenase</keyword>
<keyword id="KW-0560">Oxidoreductase</keyword>
<keyword id="KW-1185">Reference proteome</keyword>
<feature type="chain" id="PRO_0000458915" description="Sulfoquinovose monooxygenase">
    <location>
        <begin position="1"/>
        <end position="385"/>
    </location>
</feature>
<feature type="region of interest" description="Disordered" evidence="1">
    <location>
        <begin position="366"/>
        <end position="385"/>
    </location>
</feature>
<feature type="strand" evidence="7">
    <location>
        <begin position="13"/>
        <end position="19"/>
    </location>
</feature>
<feature type="helix" evidence="7">
    <location>
        <begin position="35"/>
        <end position="37"/>
    </location>
</feature>
<feature type="helix" evidence="7">
    <location>
        <begin position="41"/>
        <end position="54"/>
    </location>
</feature>
<feature type="strand" evidence="7">
    <location>
        <begin position="57"/>
        <end position="61"/>
    </location>
</feature>
<feature type="strand" evidence="7">
    <location>
        <begin position="65"/>
        <end position="68"/>
    </location>
</feature>
<feature type="helix" evidence="7">
    <location>
        <begin position="71"/>
        <end position="81"/>
    </location>
</feature>
<feature type="strand" evidence="7">
    <location>
        <begin position="86"/>
        <end position="90"/>
    </location>
</feature>
<feature type="helix" evidence="7">
    <location>
        <begin position="98"/>
        <end position="111"/>
    </location>
</feature>
<feature type="turn" evidence="7">
    <location>
        <begin position="112"/>
        <end position="114"/>
    </location>
</feature>
<feature type="strand" evidence="7">
    <location>
        <begin position="116"/>
        <end position="119"/>
    </location>
</feature>
<feature type="helix" evidence="7">
    <location>
        <begin position="132"/>
        <end position="151"/>
    </location>
</feature>
<feature type="strand" evidence="7">
    <location>
        <begin position="152"/>
        <end position="158"/>
    </location>
</feature>
<feature type="strand" evidence="7">
    <location>
        <begin position="163"/>
        <end position="169"/>
    </location>
</feature>
<feature type="helix" evidence="7">
    <location>
        <begin position="170"/>
        <end position="172"/>
    </location>
</feature>
<feature type="strand" evidence="7">
    <location>
        <begin position="180"/>
        <end position="184"/>
    </location>
</feature>
<feature type="helix" evidence="7">
    <location>
        <begin position="190"/>
        <end position="199"/>
    </location>
</feature>
<feature type="strand" evidence="7">
    <location>
        <begin position="201"/>
        <end position="205"/>
    </location>
</feature>
<feature type="helix" evidence="7">
    <location>
        <begin position="210"/>
        <end position="226"/>
    </location>
</feature>
<feature type="strand" evidence="7">
    <location>
        <begin position="231"/>
        <end position="236"/>
    </location>
</feature>
<feature type="strand" evidence="7">
    <location>
        <begin position="238"/>
        <end position="244"/>
    </location>
</feature>
<feature type="helix" evidence="7">
    <location>
        <begin position="245"/>
        <end position="256"/>
    </location>
</feature>
<feature type="turn" evidence="7">
    <location>
        <begin position="288"/>
        <end position="292"/>
    </location>
</feature>
<feature type="strand" evidence="7">
    <location>
        <begin position="293"/>
        <end position="300"/>
    </location>
</feature>
<feature type="helix" evidence="7">
    <location>
        <begin position="301"/>
        <end position="306"/>
    </location>
</feature>
<feature type="strand" evidence="7">
    <location>
        <begin position="313"/>
        <end position="317"/>
    </location>
</feature>
<feature type="helix" evidence="7">
    <location>
        <begin position="318"/>
        <end position="331"/>
    </location>
</feature>
<feature type="strand" evidence="7">
    <location>
        <begin position="333"/>
        <end position="337"/>
    </location>
</feature>
<feature type="helix" evidence="7">
    <location>
        <begin position="343"/>
        <end position="353"/>
    </location>
</feature>
<feature type="helix" evidence="7">
    <location>
        <begin position="355"/>
        <end position="357"/>
    </location>
</feature>
<feature type="helix" evidence="7">
    <location>
        <begin position="363"/>
        <end position="367"/>
    </location>
</feature>
<feature type="turn" evidence="7">
    <location>
        <begin position="378"/>
        <end position="381"/>
    </location>
</feature>
<organism>
    <name type="scientific">Agrobacterium fabrum (strain C58 / ATCC 33970)</name>
    <name type="common">Agrobacterium tumefaciens (strain C58)</name>
    <dbReference type="NCBI Taxonomy" id="176299"/>
    <lineage>
        <taxon>Bacteria</taxon>
        <taxon>Pseudomonadati</taxon>
        <taxon>Pseudomonadota</taxon>
        <taxon>Alphaproteobacteria</taxon>
        <taxon>Hyphomicrobiales</taxon>
        <taxon>Rhizobiaceae</taxon>
        <taxon>Rhizobium/Agrobacterium group</taxon>
        <taxon>Agrobacterium</taxon>
        <taxon>Agrobacterium tumefaciens complex</taxon>
    </lineage>
</organism>
<proteinExistence type="evidence at protein level"/>
<name>SQMOX_AGRFC</name>
<gene>
    <name evidence="3" type="primary">smoC</name>
    <name evidence="5" type="ordered locus">Atu3279</name>
</gene>
<evidence type="ECO:0000256" key="1">
    <source>
        <dbReference type="SAM" id="MobiDB-lite"/>
    </source>
</evidence>
<evidence type="ECO:0000269" key="2">
    <source>
    </source>
</evidence>
<evidence type="ECO:0000303" key="3">
    <source>
    </source>
</evidence>
<evidence type="ECO:0000305" key="4"/>
<evidence type="ECO:0000312" key="5">
    <source>
        <dbReference type="EMBL" id="AAK90111.1"/>
    </source>
</evidence>
<evidence type="ECO:0007744" key="6">
    <source>
        <dbReference type="PDB" id="7OLF"/>
    </source>
</evidence>
<evidence type="ECO:0007829" key="7">
    <source>
        <dbReference type="PDB" id="7OLF"/>
    </source>
</evidence>
<accession>A9CEY7</accession>
<sequence>MTVVPVTSADLDAAEVSWFSALCSDDYAYLGVPDGSLRSSFEHCSDIVKKAEELGFRNILCPSSYQVGQDTLSFVAGCAPISDRINFLAAIRCGEMQPIMLARTVATLDHMLKGRLTLNVISSDFPGEVADSAFRYKRSHEVVEILRQAWTRDTIDHDGEIYQFKGVSTEPARPYQLNGGPLLYFGGYSPDALELCGAQCDVYLMWPETKDQLADRMRAAHERAAAHGRTLDYGLRVHMVVRDTEQEAREYADHLVSKLDDEYGQLIRNRAHDSGSLGVSHQARARELADKFGYVEPNLWTGIGRARSGCGAALVGSTDQVLSALEEYQKMGIRAFILSGYPHLDEAEHFGTKVLPQMKTCSLPHAYGRVPSETPATPLGNGERH</sequence>